<comment type="function">
    <text evidence="1">This is one of the proteins that bind and probably mediate the attachment of the 5S RNA into the large ribosomal subunit, where it forms part of the central protuberance. In the 70S ribosome it contacts protein S13 of the 30S subunit (bridge B1b), connecting the 2 subunits; this bridge is implicated in subunit movement. Contacts the P site tRNA; the 5S rRNA and some of its associated proteins might help stabilize positioning of ribosome-bound tRNAs.</text>
</comment>
<comment type="subunit">
    <text evidence="1">Part of the 50S ribosomal subunit; part of the 5S rRNA/L5/L18/L25 subcomplex. Contacts the 5S rRNA and the P site tRNA. Forms a bridge to the 30S subunit in the 70S ribosome.</text>
</comment>
<comment type="similarity">
    <text evidence="1">Belongs to the universal ribosomal protein uL5 family.</text>
</comment>
<organism>
    <name type="scientific">Acinetobacter baylyi (strain ATCC 33305 / BD413 / ADP1)</name>
    <dbReference type="NCBI Taxonomy" id="62977"/>
    <lineage>
        <taxon>Bacteria</taxon>
        <taxon>Pseudomonadati</taxon>
        <taxon>Pseudomonadota</taxon>
        <taxon>Gammaproteobacteria</taxon>
        <taxon>Moraxellales</taxon>
        <taxon>Moraxellaceae</taxon>
        <taxon>Acinetobacter</taxon>
    </lineage>
</organism>
<gene>
    <name evidence="1" type="primary">rplE</name>
    <name type="ordered locus">ACIAD3207</name>
</gene>
<accession>Q6F7S4</accession>
<name>RL5_ACIAD</name>
<keyword id="KW-0687">Ribonucleoprotein</keyword>
<keyword id="KW-0689">Ribosomal protein</keyword>
<keyword id="KW-0694">RNA-binding</keyword>
<keyword id="KW-0699">rRNA-binding</keyword>
<keyword id="KW-0820">tRNA-binding</keyword>
<sequence length="178" mass="20094">MARLKTRYNEELKAKLQQELGIKNVMEIPRITKITLNMGVGAAATDKKLLDGAVADMQLIAGQKPVVTLARKSIAGFKIRDGWPIGCKVTLRGEQMYEFLDRLISIAIPRIRDFRGFSSKSFDGRGNYSMGLKEQIVFPEIDFDKIDRIRGMDITITTTARTDDEGRALMRTFGFPFK</sequence>
<protein>
    <recommendedName>
        <fullName evidence="1">Large ribosomal subunit protein uL5</fullName>
    </recommendedName>
    <alternativeName>
        <fullName evidence="2">50S ribosomal protein L5</fullName>
    </alternativeName>
</protein>
<dbReference type="EMBL" id="CR543861">
    <property type="protein sequence ID" value="CAG69891.1"/>
    <property type="molecule type" value="Genomic_DNA"/>
</dbReference>
<dbReference type="RefSeq" id="WP_004924127.1">
    <property type="nucleotide sequence ID" value="NC_005966.1"/>
</dbReference>
<dbReference type="SMR" id="Q6F7S4"/>
<dbReference type="STRING" id="202950.GCA_001485005_02948"/>
<dbReference type="GeneID" id="45235422"/>
<dbReference type="KEGG" id="aci:ACIAD3207"/>
<dbReference type="eggNOG" id="COG0094">
    <property type="taxonomic scope" value="Bacteria"/>
</dbReference>
<dbReference type="HOGENOM" id="CLU_061015_2_1_6"/>
<dbReference type="OrthoDB" id="9806626at2"/>
<dbReference type="BioCyc" id="ASP62977:ACIAD_RS14535-MONOMER"/>
<dbReference type="Proteomes" id="UP000000430">
    <property type="component" value="Chromosome"/>
</dbReference>
<dbReference type="GO" id="GO:1990904">
    <property type="term" value="C:ribonucleoprotein complex"/>
    <property type="evidence" value="ECO:0007669"/>
    <property type="project" value="UniProtKB-KW"/>
</dbReference>
<dbReference type="GO" id="GO:0005840">
    <property type="term" value="C:ribosome"/>
    <property type="evidence" value="ECO:0007669"/>
    <property type="project" value="UniProtKB-KW"/>
</dbReference>
<dbReference type="GO" id="GO:0019843">
    <property type="term" value="F:rRNA binding"/>
    <property type="evidence" value="ECO:0007669"/>
    <property type="project" value="UniProtKB-UniRule"/>
</dbReference>
<dbReference type="GO" id="GO:0003735">
    <property type="term" value="F:structural constituent of ribosome"/>
    <property type="evidence" value="ECO:0007669"/>
    <property type="project" value="InterPro"/>
</dbReference>
<dbReference type="GO" id="GO:0000049">
    <property type="term" value="F:tRNA binding"/>
    <property type="evidence" value="ECO:0007669"/>
    <property type="project" value="UniProtKB-UniRule"/>
</dbReference>
<dbReference type="GO" id="GO:0006412">
    <property type="term" value="P:translation"/>
    <property type="evidence" value="ECO:0007669"/>
    <property type="project" value="UniProtKB-UniRule"/>
</dbReference>
<dbReference type="FunFam" id="3.30.1440.10:FF:000001">
    <property type="entry name" value="50S ribosomal protein L5"/>
    <property type="match status" value="1"/>
</dbReference>
<dbReference type="Gene3D" id="3.30.1440.10">
    <property type="match status" value="1"/>
</dbReference>
<dbReference type="HAMAP" id="MF_01333_B">
    <property type="entry name" value="Ribosomal_uL5_B"/>
    <property type="match status" value="1"/>
</dbReference>
<dbReference type="InterPro" id="IPR002132">
    <property type="entry name" value="Ribosomal_uL5"/>
</dbReference>
<dbReference type="InterPro" id="IPR020930">
    <property type="entry name" value="Ribosomal_uL5_bac-type"/>
</dbReference>
<dbReference type="InterPro" id="IPR031309">
    <property type="entry name" value="Ribosomal_uL5_C"/>
</dbReference>
<dbReference type="InterPro" id="IPR020929">
    <property type="entry name" value="Ribosomal_uL5_CS"/>
</dbReference>
<dbReference type="InterPro" id="IPR022803">
    <property type="entry name" value="Ribosomal_uL5_dom_sf"/>
</dbReference>
<dbReference type="InterPro" id="IPR031310">
    <property type="entry name" value="Ribosomal_uL5_N"/>
</dbReference>
<dbReference type="NCBIfam" id="NF000585">
    <property type="entry name" value="PRK00010.1"/>
    <property type="match status" value="1"/>
</dbReference>
<dbReference type="PANTHER" id="PTHR11994">
    <property type="entry name" value="60S RIBOSOMAL PROTEIN L11-RELATED"/>
    <property type="match status" value="1"/>
</dbReference>
<dbReference type="Pfam" id="PF00281">
    <property type="entry name" value="Ribosomal_L5"/>
    <property type="match status" value="1"/>
</dbReference>
<dbReference type="Pfam" id="PF00673">
    <property type="entry name" value="Ribosomal_L5_C"/>
    <property type="match status" value="1"/>
</dbReference>
<dbReference type="PIRSF" id="PIRSF002161">
    <property type="entry name" value="Ribosomal_L5"/>
    <property type="match status" value="1"/>
</dbReference>
<dbReference type="SUPFAM" id="SSF55282">
    <property type="entry name" value="RL5-like"/>
    <property type="match status" value="1"/>
</dbReference>
<dbReference type="PROSITE" id="PS00358">
    <property type="entry name" value="RIBOSOMAL_L5"/>
    <property type="match status" value="1"/>
</dbReference>
<proteinExistence type="inferred from homology"/>
<reference key="1">
    <citation type="journal article" date="2004" name="Nucleic Acids Res.">
        <title>Unique features revealed by the genome sequence of Acinetobacter sp. ADP1, a versatile and naturally transformation competent bacterium.</title>
        <authorList>
            <person name="Barbe V."/>
            <person name="Vallenet D."/>
            <person name="Fonknechten N."/>
            <person name="Kreimeyer A."/>
            <person name="Oztas S."/>
            <person name="Labarre L."/>
            <person name="Cruveiller S."/>
            <person name="Robert C."/>
            <person name="Duprat S."/>
            <person name="Wincker P."/>
            <person name="Ornston L.N."/>
            <person name="Weissenbach J."/>
            <person name="Marliere P."/>
            <person name="Cohen G.N."/>
            <person name="Medigue C."/>
        </authorList>
    </citation>
    <scope>NUCLEOTIDE SEQUENCE [LARGE SCALE GENOMIC DNA]</scope>
    <source>
        <strain>ATCC 33305 / BD413 / ADP1</strain>
    </source>
</reference>
<feature type="chain" id="PRO_0000242958" description="Large ribosomal subunit protein uL5">
    <location>
        <begin position="1"/>
        <end position="178"/>
    </location>
</feature>
<evidence type="ECO:0000255" key="1">
    <source>
        <dbReference type="HAMAP-Rule" id="MF_01333"/>
    </source>
</evidence>
<evidence type="ECO:0000305" key="2"/>